<organism>
    <name type="scientific">Mesorhizobium japonicum (strain LMG 29417 / CECT 9101 / MAFF 303099)</name>
    <name type="common">Mesorhizobium loti (strain MAFF 303099)</name>
    <dbReference type="NCBI Taxonomy" id="266835"/>
    <lineage>
        <taxon>Bacteria</taxon>
        <taxon>Pseudomonadati</taxon>
        <taxon>Pseudomonadota</taxon>
        <taxon>Alphaproteobacteria</taxon>
        <taxon>Hyphomicrobiales</taxon>
        <taxon>Phyllobacteriaceae</taxon>
        <taxon>Mesorhizobium</taxon>
    </lineage>
</organism>
<accession>Q98KR6</accession>
<gene>
    <name evidence="1" type="primary">nuoK</name>
    <name type="ordered locus">mll1357</name>
</gene>
<keyword id="KW-0997">Cell inner membrane</keyword>
<keyword id="KW-1003">Cell membrane</keyword>
<keyword id="KW-0472">Membrane</keyword>
<keyword id="KW-0520">NAD</keyword>
<keyword id="KW-0874">Quinone</keyword>
<keyword id="KW-1278">Translocase</keyword>
<keyword id="KW-0812">Transmembrane</keyword>
<keyword id="KW-1133">Transmembrane helix</keyword>
<keyword id="KW-0813">Transport</keyword>
<keyword id="KW-0830">Ubiquinone</keyword>
<name>NUOK_RHILO</name>
<protein>
    <recommendedName>
        <fullName evidence="1">NADH-quinone oxidoreductase subunit K</fullName>
        <ecNumber evidence="1">7.1.1.-</ecNumber>
    </recommendedName>
    <alternativeName>
        <fullName evidence="1">NADH dehydrogenase I subunit K</fullName>
    </alternativeName>
    <alternativeName>
        <fullName evidence="1">NDH-1 subunit K</fullName>
    </alternativeName>
</protein>
<dbReference type="EC" id="7.1.1.-" evidence="1"/>
<dbReference type="EMBL" id="BA000012">
    <property type="protein sequence ID" value="BAB48748.1"/>
    <property type="molecule type" value="Genomic_DNA"/>
</dbReference>
<dbReference type="RefSeq" id="WP_010910101.1">
    <property type="nucleotide sequence ID" value="NC_002678.2"/>
</dbReference>
<dbReference type="SMR" id="Q98KR6"/>
<dbReference type="GeneID" id="91561816"/>
<dbReference type="KEGG" id="mlo:mll1357"/>
<dbReference type="eggNOG" id="COG0713">
    <property type="taxonomic scope" value="Bacteria"/>
</dbReference>
<dbReference type="HOGENOM" id="CLU_144724_2_0_5"/>
<dbReference type="Proteomes" id="UP000000552">
    <property type="component" value="Chromosome"/>
</dbReference>
<dbReference type="GO" id="GO:0030964">
    <property type="term" value="C:NADH dehydrogenase complex"/>
    <property type="evidence" value="ECO:0007669"/>
    <property type="project" value="TreeGrafter"/>
</dbReference>
<dbReference type="GO" id="GO:0005886">
    <property type="term" value="C:plasma membrane"/>
    <property type="evidence" value="ECO:0007669"/>
    <property type="project" value="UniProtKB-SubCell"/>
</dbReference>
<dbReference type="GO" id="GO:0050136">
    <property type="term" value="F:NADH:ubiquinone reductase (non-electrogenic) activity"/>
    <property type="evidence" value="ECO:0007669"/>
    <property type="project" value="UniProtKB-UniRule"/>
</dbReference>
<dbReference type="GO" id="GO:0048038">
    <property type="term" value="F:quinone binding"/>
    <property type="evidence" value="ECO:0007669"/>
    <property type="project" value="UniProtKB-KW"/>
</dbReference>
<dbReference type="GO" id="GO:0042773">
    <property type="term" value="P:ATP synthesis coupled electron transport"/>
    <property type="evidence" value="ECO:0007669"/>
    <property type="project" value="InterPro"/>
</dbReference>
<dbReference type="FunFam" id="1.10.287.3510:FF:000001">
    <property type="entry name" value="NADH-quinone oxidoreductase subunit K"/>
    <property type="match status" value="1"/>
</dbReference>
<dbReference type="Gene3D" id="1.10.287.3510">
    <property type="match status" value="1"/>
</dbReference>
<dbReference type="HAMAP" id="MF_01456">
    <property type="entry name" value="NDH1_NuoK"/>
    <property type="match status" value="1"/>
</dbReference>
<dbReference type="InterPro" id="IPR001133">
    <property type="entry name" value="NADH_UbQ_OxRdtase_chain4L/K"/>
</dbReference>
<dbReference type="InterPro" id="IPR039428">
    <property type="entry name" value="NUOK/Mnh_C1-like"/>
</dbReference>
<dbReference type="NCBIfam" id="NF004320">
    <property type="entry name" value="PRK05715.1-2"/>
    <property type="match status" value="1"/>
</dbReference>
<dbReference type="NCBIfam" id="NF004321">
    <property type="entry name" value="PRK05715.1-3"/>
    <property type="match status" value="1"/>
</dbReference>
<dbReference type="NCBIfam" id="NF004323">
    <property type="entry name" value="PRK05715.1-5"/>
    <property type="match status" value="1"/>
</dbReference>
<dbReference type="PANTHER" id="PTHR11434:SF21">
    <property type="entry name" value="NADH DEHYDROGENASE SUBUNIT 4L-RELATED"/>
    <property type="match status" value="1"/>
</dbReference>
<dbReference type="PANTHER" id="PTHR11434">
    <property type="entry name" value="NADH-UBIQUINONE OXIDOREDUCTASE SUBUNIT ND4L"/>
    <property type="match status" value="1"/>
</dbReference>
<dbReference type="Pfam" id="PF00420">
    <property type="entry name" value="Oxidored_q2"/>
    <property type="match status" value="1"/>
</dbReference>
<feature type="chain" id="PRO_0000390194" description="NADH-quinone oxidoreductase subunit K">
    <location>
        <begin position="1"/>
        <end position="102"/>
    </location>
</feature>
<feature type="transmembrane region" description="Helical" evidence="1">
    <location>
        <begin position="5"/>
        <end position="25"/>
    </location>
</feature>
<feature type="transmembrane region" description="Helical" evidence="1">
    <location>
        <begin position="31"/>
        <end position="51"/>
    </location>
</feature>
<feature type="transmembrane region" description="Helical" evidence="1">
    <location>
        <begin position="66"/>
        <end position="86"/>
    </location>
</feature>
<evidence type="ECO:0000255" key="1">
    <source>
        <dbReference type="HAMAP-Rule" id="MF_01456"/>
    </source>
</evidence>
<sequence>MVVGIAHYLTVSAVLFTLGVFGIFLNRKNVIVILMSVELILLAVNINFVAFSAALGDLVGQVFALFVLTVAAAEAAIGLAILVVFFRNRGSIAVEDVNMMKG</sequence>
<comment type="function">
    <text evidence="1">NDH-1 shuttles electrons from NADH, via FMN and iron-sulfur (Fe-S) centers, to quinones in the respiratory chain. The immediate electron acceptor for the enzyme in this species is believed to be ubiquinone. Couples the redox reaction to proton translocation (for every two electrons transferred, four hydrogen ions are translocated across the cytoplasmic membrane), and thus conserves the redox energy in a proton gradient.</text>
</comment>
<comment type="catalytic activity">
    <reaction evidence="1">
        <text>a quinone + NADH + 5 H(+)(in) = a quinol + NAD(+) + 4 H(+)(out)</text>
        <dbReference type="Rhea" id="RHEA:57888"/>
        <dbReference type="ChEBI" id="CHEBI:15378"/>
        <dbReference type="ChEBI" id="CHEBI:24646"/>
        <dbReference type="ChEBI" id="CHEBI:57540"/>
        <dbReference type="ChEBI" id="CHEBI:57945"/>
        <dbReference type="ChEBI" id="CHEBI:132124"/>
    </reaction>
</comment>
<comment type="subunit">
    <text evidence="1">NDH-1 is composed of 14 different subunits. Subunits NuoA, H, J, K, L, M, N constitute the membrane sector of the complex.</text>
</comment>
<comment type="subcellular location">
    <subcellularLocation>
        <location evidence="1">Cell inner membrane</location>
        <topology evidence="1">Multi-pass membrane protein</topology>
    </subcellularLocation>
</comment>
<comment type="similarity">
    <text evidence="1">Belongs to the complex I subunit 4L family.</text>
</comment>
<reference key="1">
    <citation type="journal article" date="2000" name="DNA Res.">
        <title>Complete genome structure of the nitrogen-fixing symbiotic bacterium Mesorhizobium loti.</title>
        <authorList>
            <person name="Kaneko T."/>
            <person name="Nakamura Y."/>
            <person name="Sato S."/>
            <person name="Asamizu E."/>
            <person name="Kato T."/>
            <person name="Sasamoto S."/>
            <person name="Watanabe A."/>
            <person name="Idesawa K."/>
            <person name="Ishikawa A."/>
            <person name="Kawashima K."/>
            <person name="Kimura T."/>
            <person name="Kishida Y."/>
            <person name="Kiyokawa C."/>
            <person name="Kohara M."/>
            <person name="Matsumoto M."/>
            <person name="Matsuno A."/>
            <person name="Mochizuki Y."/>
            <person name="Nakayama S."/>
            <person name="Nakazaki N."/>
            <person name="Shimpo S."/>
            <person name="Sugimoto M."/>
            <person name="Takeuchi C."/>
            <person name="Yamada M."/>
            <person name="Tabata S."/>
        </authorList>
    </citation>
    <scope>NUCLEOTIDE SEQUENCE [LARGE SCALE GENOMIC DNA]</scope>
    <source>
        <strain>LMG 29417 / CECT 9101 / MAFF 303099</strain>
    </source>
</reference>
<proteinExistence type="inferred from homology"/>